<sequence length="328" mass="33439">TNPSDPTGTCVSAVDCQGSAGYYTDDSVSDAKECKKCNAPCTACAGTADKCTKCDANGAAPYLKKTNPSDPTGTCVSAVDCQGSAGYYTDDSVSDAKECKKCNAPCTACAGTADKCTKCDANGAAPYLKKTNPSDPTGTCVSAVDCQGSAGYYTDDSVSDAKECKKCAEGQKPNTAGTQCFSCSDANCERCDQNDVCARCSTGAPPENGKCPAATPGCHSSCDGCTENAMTNQADKCTGCKEGRYLKPESAAGQSGACLTAEECTSDKTHFTREKAGDSKGMCLSCSDATHGITGCKKCALKTLSGEAESTVVCSECTDKRLTPSGNA</sequence>
<dbReference type="EMBL" id="X06741">
    <property type="protein sequence ID" value="CAA29916.1"/>
    <property type="molecule type" value="Genomic_DNA"/>
</dbReference>
<dbReference type="PIR" id="A42125">
    <property type="entry name" value="A42125"/>
</dbReference>
<dbReference type="VEuPathDB" id="GiardiaDB:DHA2_150432"/>
<dbReference type="VEuPathDB" id="GiardiaDB:GL50803_00221693"/>
<dbReference type="eggNOG" id="KOG3525">
    <property type="taxonomic scope" value="Eukaryota"/>
</dbReference>
<dbReference type="Gene3D" id="2.10.220.10">
    <property type="entry name" value="Hormone Receptor, Insulin-like Growth Factor Receptor 1, Chain A, domain 2"/>
    <property type="match status" value="1"/>
</dbReference>
<dbReference type="InterPro" id="IPR006212">
    <property type="entry name" value="Furin_repeat"/>
</dbReference>
<dbReference type="InterPro" id="IPR009030">
    <property type="entry name" value="Growth_fac_rcpt_cys_sf"/>
</dbReference>
<dbReference type="SMART" id="SM00261">
    <property type="entry name" value="FU"/>
    <property type="match status" value="3"/>
</dbReference>
<dbReference type="SUPFAM" id="SSF57184">
    <property type="entry name" value="Growth factor receptor domain"/>
    <property type="match status" value="2"/>
</dbReference>
<feature type="chain" id="PRO_0000065037" description="Surface antigen CRP170">
    <location>
        <begin position="1" status="less than"/>
        <end position="328" status="greater than"/>
    </location>
</feature>
<feature type="repeat">
    <location>
        <begin position="38"/>
        <end position="102"/>
    </location>
</feature>
<feature type="repeat">
    <location>
        <begin position="103"/>
        <end position="167"/>
    </location>
</feature>
<feature type="non-terminal residue">
    <location>
        <position position="1"/>
    </location>
</feature>
<feature type="non-terminal residue">
    <location>
        <position position="328"/>
    </location>
</feature>
<comment type="miscellaneous">
    <text>Cysteine-rich, antigenically variant surface protein.</text>
</comment>
<organism>
    <name type="scientific">Giardia intestinalis</name>
    <name type="common">Giardia lamblia</name>
    <dbReference type="NCBI Taxonomy" id="5741"/>
    <lineage>
        <taxon>Eukaryota</taxon>
        <taxon>Metamonada</taxon>
        <taxon>Diplomonadida</taxon>
        <taxon>Hexamitidae</taxon>
        <taxon>Giardiinae</taxon>
        <taxon>Giardia</taxon>
    </lineage>
</organism>
<protein>
    <recommendedName>
        <fullName>Surface antigen CRP170</fullName>
    </recommendedName>
</protein>
<accession>P15799</accession>
<name>C170_GIAIN</name>
<reference key="1">
    <citation type="journal article" date="1988" name="J. Exp. Med.">
        <title>Antigenic variation of a cysteine-rich protein in Giardia lamblia.</title>
        <authorList>
            <person name="Adam R.D."/>
            <person name="Aggarwal A."/>
            <person name="Lal A.A."/>
            <person name="de la Cruz V.F."/>
            <person name="McCutchan T."/>
            <person name="Nash T.E."/>
        </authorList>
    </citation>
    <scope>NUCLEOTIDE SEQUENCE [GENOMIC DNA]</scope>
    <source>
        <strain>ATCC 30957 / WB</strain>
    </source>
</reference>
<proteinExistence type="predicted"/>
<keyword id="KW-0677">Repeat</keyword>